<sequence length="673" mass="75377">MPSLRTRREEAEMELSAPGPSPWTPAPQARVSDAPAVTHPGSAACGTPCCSDTELEAICPHYQQPDCDTRTEDKEFLHKEDIHEDLESQAEISENYAGDVFQVPKLGDLCDDVSERDWGVPEGRRLPQSLSQEGDFTPAAMGLLRGPLGEKDLDCNGFDSCFSLSPNLMACQEIPTEERPHPYDMGGQSFQHSVDLTGHEGVPTAESPLICNECGKTFRGNPDLIQRQIVHTGEASFMCDDCGKTFSQNSVLKNRHXSHMSEKAFRGHSDFSRHQSHHSSERPYTCTECGKAFSQNSSLKKHQKSHMSEKPYECNECGKAFRRSSNLIQHQRIHSGEKPYVCSECGKAFRRSSNLIKHHRTHTGEKPFECGECGKAFSQSAHLRKHQRVHTGEKPYECNDCGKPFSRVSNLIKHHRVHTGEKPYKCSDCGKAFSQSSSLIQHRRIHTGEKPHVCNVCGKAFSYSSVLRKHQIIHTGEKPYRCSVCGKAFSHSSALIQHQGVHTGDKPYACHECGKTFGRSSNLILHQRVHTGEKPYECTECGKTFSQSSTLIQHQRIHNGLKPHECNQCGKAFNRSSNLIHHQKVHTGEKPYTCVECGKGFSQSSHLIQHQIIHTGERPYKCSECGKAFSQRSVLIQHQRIHTGVKPYDCAACGKAFSQRSKLIKHQLIHTRE</sequence>
<keyword id="KW-0007">Acetylation</keyword>
<keyword id="KW-0010">Activator</keyword>
<keyword id="KW-0131">Cell cycle</keyword>
<keyword id="KW-0132">Cell division</keyword>
<keyword id="KW-0238">DNA-binding</keyword>
<keyword id="KW-1017">Isopeptide bond</keyword>
<keyword id="KW-0479">Metal-binding</keyword>
<keyword id="KW-0497">Mitogen</keyword>
<keyword id="KW-0539">Nucleus</keyword>
<keyword id="KW-1185">Reference proteome</keyword>
<keyword id="KW-0677">Repeat</keyword>
<keyword id="KW-0804">Transcription</keyword>
<keyword id="KW-0805">Transcription regulation</keyword>
<keyword id="KW-0832">Ubl conjugation</keyword>
<keyword id="KW-0862">Zinc</keyword>
<keyword id="KW-0863">Zinc-finger</keyword>
<evidence type="ECO:0000250" key="1"/>
<evidence type="ECO:0000250" key="2">
    <source>
        <dbReference type="UniProtKB" id="P17020"/>
    </source>
</evidence>
<evidence type="ECO:0000255" key="3">
    <source>
        <dbReference type="PROSITE-ProRule" id="PRU00042"/>
    </source>
</evidence>
<evidence type="ECO:0000256" key="4">
    <source>
        <dbReference type="SAM" id="MobiDB-lite"/>
    </source>
</evidence>
<evidence type="ECO:0000305" key="5"/>
<dbReference type="EMBL" id="DQ977236">
    <property type="protein sequence ID" value="ABM54313.1"/>
    <property type="molecule type" value="Genomic_DNA"/>
</dbReference>
<dbReference type="eggNOG" id="KOG1721">
    <property type="taxonomic scope" value="Eukaryota"/>
</dbReference>
<dbReference type="Proteomes" id="UP000240080">
    <property type="component" value="Unplaced"/>
</dbReference>
<dbReference type="GO" id="GO:0005654">
    <property type="term" value="C:nucleoplasm"/>
    <property type="evidence" value="ECO:0007669"/>
    <property type="project" value="TreeGrafter"/>
</dbReference>
<dbReference type="GO" id="GO:0005634">
    <property type="term" value="C:nucleus"/>
    <property type="evidence" value="ECO:0000250"/>
    <property type="project" value="UniProtKB"/>
</dbReference>
<dbReference type="GO" id="GO:0001227">
    <property type="term" value="F:DNA-binding transcription repressor activity, RNA polymerase II-specific"/>
    <property type="evidence" value="ECO:0007669"/>
    <property type="project" value="TreeGrafter"/>
</dbReference>
<dbReference type="GO" id="GO:0000978">
    <property type="term" value="F:RNA polymerase II cis-regulatory region sequence-specific DNA binding"/>
    <property type="evidence" value="ECO:0007669"/>
    <property type="project" value="TreeGrafter"/>
</dbReference>
<dbReference type="GO" id="GO:0008270">
    <property type="term" value="F:zinc ion binding"/>
    <property type="evidence" value="ECO:0007669"/>
    <property type="project" value="UniProtKB-KW"/>
</dbReference>
<dbReference type="GO" id="GO:0051301">
    <property type="term" value="P:cell division"/>
    <property type="evidence" value="ECO:0007669"/>
    <property type="project" value="UniProtKB-KW"/>
</dbReference>
<dbReference type="GO" id="GO:0072707">
    <property type="term" value="P:cellular response to sodium dodecyl sulfate"/>
    <property type="evidence" value="ECO:0000250"/>
    <property type="project" value="UniProtKB"/>
</dbReference>
<dbReference type="GO" id="GO:0043066">
    <property type="term" value="P:negative regulation of apoptotic process"/>
    <property type="evidence" value="ECO:0000250"/>
    <property type="project" value="UniProtKB"/>
</dbReference>
<dbReference type="GO" id="GO:1901989">
    <property type="term" value="P:positive regulation of cell cycle phase transition"/>
    <property type="evidence" value="ECO:0000250"/>
    <property type="project" value="UniProtKB"/>
</dbReference>
<dbReference type="GO" id="GO:0051781">
    <property type="term" value="P:positive regulation of cell division"/>
    <property type="evidence" value="ECO:0007669"/>
    <property type="project" value="UniProtKB-KW"/>
</dbReference>
<dbReference type="GO" id="GO:0008284">
    <property type="term" value="P:positive regulation of cell population proliferation"/>
    <property type="evidence" value="ECO:0000250"/>
    <property type="project" value="UniProtKB"/>
</dbReference>
<dbReference type="GO" id="GO:0045648">
    <property type="term" value="P:positive regulation of erythrocyte differentiation"/>
    <property type="evidence" value="ECO:0000250"/>
    <property type="project" value="UniProtKB"/>
</dbReference>
<dbReference type="GO" id="GO:0033674">
    <property type="term" value="P:positive regulation of kinase activity"/>
    <property type="evidence" value="ECO:0000250"/>
    <property type="project" value="UniProtKB"/>
</dbReference>
<dbReference type="GO" id="GO:0045654">
    <property type="term" value="P:positive regulation of megakaryocyte differentiation"/>
    <property type="evidence" value="ECO:0000250"/>
    <property type="project" value="UniProtKB"/>
</dbReference>
<dbReference type="GO" id="GO:0001817">
    <property type="term" value="P:regulation of cytokine production"/>
    <property type="evidence" value="ECO:0007669"/>
    <property type="project" value="TreeGrafter"/>
</dbReference>
<dbReference type="FunFam" id="3.30.160.60:FF:000478">
    <property type="entry name" value="Zinc finger protein 133"/>
    <property type="match status" value="1"/>
</dbReference>
<dbReference type="FunFam" id="3.30.160.60:FF:000914">
    <property type="entry name" value="Zinc finger protein 16"/>
    <property type="match status" value="3"/>
</dbReference>
<dbReference type="FunFam" id="3.30.160.60:FF:001618">
    <property type="entry name" value="Zinc finger protein 16"/>
    <property type="match status" value="1"/>
</dbReference>
<dbReference type="FunFam" id="3.30.160.60:FF:001658">
    <property type="entry name" value="Zinc finger protein 16"/>
    <property type="match status" value="1"/>
</dbReference>
<dbReference type="FunFam" id="3.30.160.60:FF:001901">
    <property type="entry name" value="Zinc finger protein 16"/>
    <property type="match status" value="1"/>
</dbReference>
<dbReference type="FunFam" id="3.30.160.60:FF:001903">
    <property type="entry name" value="Zinc finger protein 16"/>
    <property type="match status" value="1"/>
</dbReference>
<dbReference type="FunFam" id="3.30.160.60:FF:002711">
    <property type="entry name" value="Zinc finger protein 16"/>
    <property type="match status" value="1"/>
</dbReference>
<dbReference type="FunFam" id="3.30.160.60:FF:000274">
    <property type="entry name" value="zinc finger protein 16"/>
    <property type="match status" value="1"/>
</dbReference>
<dbReference type="FunFam" id="3.30.160.60:FF:000824">
    <property type="entry name" value="Zinc finger protein 184"/>
    <property type="match status" value="1"/>
</dbReference>
<dbReference type="FunFam" id="3.30.160.60:FF:001298">
    <property type="entry name" value="zinc finger protein 23 isoform X1"/>
    <property type="match status" value="1"/>
</dbReference>
<dbReference type="FunFam" id="3.30.160.60:FF:000269">
    <property type="entry name" value="Zinc finger protein 287"/>
    <property type="match status" value="1"/>
</dbReference>
<dbReference type="FunFam" id="3.30.160.60:FF:000352">
    <property type="entry name" value="zinc finger protein 3 homolog"/>
    <property type="match status" value="1"/>
</dbReference>
<dbReference type="FunFam" id="3.30.160.60:FF:002090">
    <property type="entry name" value="Zinc finger protein 473"/>
    <property type="match status" value="1"/>
</dbReference>
<dbReference type="FunFam" id="3.30.160.60:FF:000330">
    <property type="entry name" value="Zinc finger with KRAB and SCAN domains 1"/>
    <property type="match status" value="1"/>
</dbReference>
<dbReference type="Gene3D" id="3.30.160.60">
    <property type="entry name" value="Classic Zinc Finger"/>
    <property type="match status" value="16"/>
</dbReference>
<dbReference type="InterPro" id="IPR036236">
    <property type="entry name" value="Znf_C2H2_sf"/>
</dbReference>
<dbReference type="InterPro" id="IPR013087">
    <property type="entry name" value="Znf_C2H2_type"/>
</dbReference>
<dbReference type="PANTHER" id="PTHR24399:SF75">
    <property type="entry name" value="ZFP14 ZINC FINGER PROTEIN-RELATED"/>
    <property type="match status" value="1"/>
</dbReference>
<dbReference type="PANTHER" id="PTHR24399">
    <property type="entry name" value="ZINC FINGER AND BTB DOMAIN-CONTAINING"/>
    <property type="match status" value="1"/>
</dbReference>
<dbReference type="Pfam" id="PF00096">
    <property type="entry name" value="zf-C2H2"/>
    <property type="match status" value="14"/>
</dbReference>
<dbReference type="SMART" id="SM00355">
    <property type="entry name" value="ZnF_C2H2"/>
    <property type="match status" value="16"/>
</dbReference>
<dbReference type="SUPFAM" id="SSF57667">
    <property type="entry name" value="beta-beta-alpha zinc fingers"/>
    <property type="match status" value="10"/>
</dbReference>
<dbReference type="PROSITE" id="PS00028">
    <property type="entry name" value="ZINC_FINGER_C2H2_1"/>
    <property type="match status" value="14"/>
</dbReference>
<dbReference type="PROSITE" id="PS50157">
    <property type="entry name" value="ZINC_FINGER_C2H2_2"/>
    <property type="match status" value="16"/>
</dbReference>
<organism>
    <name type="scientific">Pan paniscus</name>
    <name type="common">Pygmy chimpanzee</name>
    <name type="synonym">Bonobo</name>
    <dbReference type="NCBI Taxonomy" id="9597"/>
    <lineage>
        <taxon>Eukaryota</taxon>
        <taxon>Metazoa</taxon>
        <taxon>Chordata</taxon>
        <taxon>Craniata</taxon>
        <taxon>Vertebrata</taxon>
        <taxon>Euteleostomi</taxon>
        <taxon>Mammalia</taxon>
        <taxon>Eutheria</taxon>
        <taxon>Euarchontoglires</taxon>
        <taxon>Primates</taxon>
        <taxon>Haplorrhini</taxon>
        <taxon>Catarrhini</taxon>
        <taxon>Hominidae</taxon>
        <taxon>Pan</taxon>
    </lineage>
</organism>
<accession>A1YG88</accession>
<reference key="1">
    <citation type="submission" date="2006-08" db="EMBL/GenBank/DDBJ databases">
        <title>Positive selection in transcription factor genes on the human lineage.</title>
        <authorList>
            <person name="Nickel G.C."/>
            <person name="Tefft D.L."/>
            <person name="Trevarthen K."/>
            <person name="Funt J."/>
            <person name="Adams M.D."/>
        </authorList>
    </citation>
    <scope>NUCLEOTIDE SEQUENCE [GENOMIC DNA]</scope>
</reference>
<protein>
    <recommendedName>
        <fullName>Zinc finger protein 16</fullName>
    </recommendedName>
</protein>
<gene>
    <name type="primary">ZNF16</name>
</gene>
<proteinExistence type="inferred from homology"/>
<name>ZNF16_PANPA</name>
<comment type="function">
    <text evidence="1">Acts as a transcriptional activator. Promotes cell proliferation by facilitating the cell cycle phase transition from the S to G2/M phase. Involved in both the hemin- and phorbol myristate acetate (PMA)-induced erythroid and megakaryocytic differentiation, respectively. Also plays a role as an inhibitor of cell apoptosis (By similarity).</text>
</comment>
<comment type="subunit">
    <text evidence="1">Interacts with INCA1; the interaction inhibits INCA1 activity and induces the cell cycle process.</text>
</comment>
<comment type="subcellular location">
    <subcellularLocation>
        <location evidence="1">Nucleus</location>
    </subcellularLocation>
</comment>
<comment type="similarity">
    <text evidence="5">Belongs to the krueppel C2H2-type zinc-finger protein family.</text>
</comment>
<feature type="chain" id="PRO_0000285466" description="Zinc finger protein 16">
    <location>
        <begin position="1"/>
        <end position="673"/>
    </location>
</feature>
<feature type="zinc finger region" description="C2H2-type 1; degenerate" evidence="3">
    <location>
        <begin position="209"/>
        <end position="231"/>
    </location>
</feature>
<feature type="zinc finger region" description="C2H2-type 2; degenerate" evidence="3">
    <location>
        <begin position="237"/>
        <end position="259"/>
    </location>
</feature>
<feature type="zinc finger region" description="C2H2-type 3" evidence="3">
    <location>
        <begin position="284"/>
        <end position="306"/>
    </location>
</feature>
<feature type="zinc finger region" description="C2H2-type 4" evidence="3">
    <location>
        <begin position="312"/>
        <end position="334"/>
    </location>
</feature>
<feature type="zinc finger region" description="C2H2-type 5" evidence="3">
    <location>
        <begin position="340"/>
        <end position="362"/>
    </location>
</feature>
<feature type="zinc finger region" description="C2H2-type 6" evidence="3">
    <location>
        <begin position="368"/>
        <end position="390"/>
    </location>
</feature>
<feature type="zinc finger region" description="C2H2-type 7" evidence="3">
    <location>
        <begin position="396"/>
        <end position="418"/>
    </location>
</feature>
<feature type="zinc finger region" description="C2H2-type 8" evidence="3">
    <location>
        <begin position="424"/>
        <end position="446"/>
    </location>
</feature>
<feature type="zinc finger region" description="C2H2-type 9" evidence="3">
    <location>
        <begin position="452"/>
        <end position="474"/>
    </location>
</feature>
<feature type="zinc finger region" description="C2H2-type 10" evidence="3">
    <location>
        <begin position="480"/>
        <end position="502"/>
    </location>
</feature>
<feature type="zinc finger region" description="C2H2-type 11" evidence="3">
    <location>
        <begin position="508"/>
        <end position="530"/>
    </location>
</feature>
<feature type="zinc finger region" description="C2H2-type 12" evidence="3">
    <location>
        <begin position="536"/>
        <end position="558"/>
    </location>
</feature>
<feature type="zinc finger region" description="C2H2-type 13" evidence="3">
    <location>
        <begin position="564"/>
        <end position="586"/>
    </location>
</feature>
<feature type="zinc finger region" description="C2H2-type 14" evidence="3">
    <location>
        <begin position="592"/>
        <end position="614"/>
    </location>
</feature>
<feature type="zinc finger region" description="C2H2-type 15" evidence="3">
    <location>
        <begin position="620"/>
        <end position="642"/>
    </location>
</feature>
<feature type="zinc finger region" description="C2H2-type 16" evidence="3">
    <location>
        <begin position="648"/>
        <end position="670"/>
    </location>
</feature>
<feature type="region of interest" description="Disordered" evidence="4">
    <location>
        <begin position="1"/>
        <end position="42"/>
    </location>
</feature>
<feature type="region of interest" description="Necessary for transcription activation" evidence="1">
    <location>
        <begin position="62"/>
        <end position="210"/>
    </location>
</feature>
<feature type="region of interest" description="Required for nuclear localization" evidence="1">
    <location>
        <begin position="332"/>
        <end position="364"/>
    </location>
</feature>
<feature type="region of interest" description="Required for nuclear localization" evidence="1">
    <location>
        <begin position="464"/>
        <end position="494"/>
    </location>
</feature>
<feature type="compositionally biased region" description="Basic and acidic residues" evidence="4">
    <location>
        <begin position="1"/>
        <end position="10"/>
    </location>
</feature>
<feature type="modified residue" description="N6-acetyllysine" evidence="2">
    <location>
        <position position="478"/>
    </location>
</feature>
<feature type="cross-link" description="Glycyl lysine isopeptide (Lys-Gly) (interchain with G-Cter in SUMO2)" evidence="2">
    <location>
        <position position="253"/>
    </location>
</feature>